<accession>B6EMV8</accession>
<reference key="1">
    <citation type="journal article" date="2008" name="BMC Genomics">
        <title>The genome sequence of the fish pathogen Aliivibrio salmonicida strain LFI1238 shows extensive evidence of gene decay.</title>
        <authorList>
            <person name="Hjerde E."/>
            <person name="Lorentzen M.S."/>
            <person name="Holden M.T."/>
            <person name="Seeger K."/>
            <person name="Paulsen S."/>
            <person name="Bason N."/>
            <person name="Churcher C."/>
            <person name="Harris D."/>
            <person name="Norbertczak H."/>
            <person name="Quail M.A."/>
            <person name="Sanders S."/>
            <person name="Thurston S."/>
            <person name="Parkhill J."/>
            <person name="Willassen N.P."/>
            <person name="Thomson N.R."/>
        </authorList>
    </citation>
    <scope>NUCLEOTIDE SEQUENCE [LARGE SCALE GENOMIC DNA]</scope>
    <source>
        <strain>LFI1238</strain>
    </source>
</reference>
<protein>
    <recommendedName>
        <fullName evidence="1">S-adenosylmethionine synthase</fullName>
        <shortName evidence="1">AdoMet synthase</shortName>
        <ecNumber evidence="1">2.5.1.6</ecNumber>
    </recommendedName>
    <alternativeName>
        <fullName evidence="1">MAT</fullName>
    </alternativeName>
    <alternativeName>
        <fullName evidence="1">Methionine adenosyltransferase</fullName>
    </alternativeName>
</protein>
<organism>
    <name type="scientific">Aliivibrio salmonicida (strain LFI1238)</name>
    <name type="common">Vibrio salmonicida (strain LFI1238)</name>
    <dbReference type="NCBI Taxonomy" id="316275"/>
    <lineage>
        <taxon>Bacteria</taxon>
        <taxon>Pseudomonadati</taxon>
        <taxon>Pseudomonadota</taxon>
        <taxon>Gammaproteobacteria</taxon>
        <taxon>Vibrionales</taxon>
        <taxon>Vibrionaceae</taxon>
        <taxon>Aliivibrio</taxon>
    </lineage>
</organism>
<keyword id="KW-0067">ATP-binding</keyword>
<keyword id="KW-0963">Cytoplasm</keyword>
<keyword id="KW-0460">Magnesium</keyword>
<keyword id="KW-0479">Metal-binding</keyword>
<keyword id="KW-0547">Nucleotide-binding</keyword>
<keyword id="KW-0554">One-carbon metabolism</keyword>
<keyword id="KW-0630">Potassium</keyword>
<keyword id="KW-0808">Transferase</keyword>
<dbReference type="EC" id="2.5.1.6" evidence="1"/>
<dbReference type="EMBL" id="FM178379">
    <property type="protein sequence ID" value="CAQ78237.1"/>
    <property type="molecule type" value="Genomic_DNA"/>
</dbReference>
<dbReference type="RefSeq" id="WP_012549361.1">
    <property type="nucleotide sequence ID" value="NC_011312.1"/>
</dbReference>
<dbReference type="SMR" id="B6EMV8"/>
<dbReference type="KEGG" id="vsa:VSAL_I0552"/>
<dbReference type="eggNOG" id="COG0192">
    <property type="taxonomic scope" value="Bacteria"/>
</dbReference>
<dbReference type="HOGENOM" id="CLU_041802_1_1_6"/>
<dbReference type="UniPathway" id="UPA00315">
    <property type="reaction ID" value="UER00080"/>
</dbReference>
<dbReference type="Proteomes" id="UP000001730">
    <property type="component" value="Chromosome 1"/>
</dbReference>
<dbReference type="GO" id="GO:0005737">
    <property type="term" value="C:cytoplasm"/>
    <property type="evidence" value="ECO:0007669"/>
    <property type="project" value="UniProtKB-SubCell"/>
</dbReference>
<dbReference type="GO" id="GO:0005524">
    <property type="term" value="F:ATP binding"/>
    <property type="evidence" value="ECO:0007669"/>
    <property type="project" value="UniProtKB-UniRule"/>
</dbReference>
<dbReference type="GO" id="GO:0000287">
    <property type="term" value="F:magnesium ion binding"/>
    <property type="evidence" value="ECO:0007669"/>
    <property type="project" value="UniProtKB-UniRule"/>
</dbReference>
<dbReference type="GO" id="GO:0004478">
    <property type="term" value="F:methionine adenosyltransferase activity"/>
    <property type="evidence" value="ECO:0007669"/>
    <property type="project" value="UniProtKB-UniRule"/>
</dbReference>
<dbReference type="GO" id="GO:0006730">
    <property type="term" value="P:one-carbon metabolic process"/>
    <property type="evidence" value="ECO:0007669"/>
    <property type="project" value="UniProtKB-KW"/>
</dbReference>
<dbReference type="GO" id="GO:0006556">
    <property type="term" value="P:S-adenosylmethionine biosynthetic process"/>
    <property type="evidence" value="ECO:0007669"/>
    <property type="project" value="UniProtKB-UniRule"/>
</dbReference>
<dbReference type="CDD" id="cd18079">
    <property type="entry name" value="S-AdoMet_synt"/>
    <property type="match status" value="1"/>
</dbReference>
<dbReference type="FunFam" id="3.30.300.10:FF:000001">
    <property type="entry name" value="S-adenosylmethionine synthase"/>
    <property type="match status" value="1"/>
</dbReference>
<dbReference type="FunFam" id="3.30.300.10:FF:000003">
    <property type="entry name" value="S-adenosylmethionine synthase"/>
    <property type="match status" value="1"/>
</dbReference>
<dbReference type="Gene3D" id="3.30.300.10">
    <property type="match status" value="3"/>
</dbReference>
<dbReference type="HAMAP" id="MF_00086">
    <property type="entry name" value="S_AdoMet_synth1"/>
    <property type="match status" value="1"/>
</dbReference>
<dbReference type="InterPro" id="IPR022631">
    <property type="entry name" value="ADOMET_SYNTHASE_CS"/>
</dbReference>
<dbReference type="InterPro" id="IPR022630">
    <property type="entry name" value="S-AdoMet_synt_C"/>
</dbReference>
<dbReference type="InterPro" id="IPR022629">
    <property type="entry name" value="S-AdoMet_synt_central"/>
</dbReference>
<dbReference type="InterPro" id="IPR022628">
    <property type="entry name" value="S-AdoMet_synt_N"/>
</dbReference>
<dbReference type="InterPro" id="IPR002133">
    <property type="entry name" value="S-AdoMet_synthetase"/>
</dbReference>
<dbReference type="InterPro" id="IPR022636">
    <property type="entry name" value="S-AdoMet_synthetase_sfam"/>
</dbReference>
<dbReference type="NCBIfam" id="TIGR01034">
    <property type="entry name" value="metK"/>
    <property type="match status" value="1"/>
</dbReference>
<dbReference type="PANTHER" id="PTHR11964">
    <property type="entry name" value="S-ADENOSYLMETHIONINE SYNTHETASE"/>
    <property type="match status" value="1"/>
</dbReference>
<dbReference type="Pfam" id="PF02773">
    <property type="entry name" value="S-AdoMet_synt_C"/>
    <property type="match status" value="1"/>
</dbReference>
<dbReference type="Pfam" id="PF02772">
    <property type="entry name" value="S-AdoMet_synt_M"/>
    <property type="match status" value="1"/>
</dbReference>
<dbReference type="Pfam" id="PF00438">
    <property type="entry name" value="S-AdoMet_synt_N"/>
    <property type="match status" value="1"/>
</dbReference>
<dbReference type="PIRSF" id="PIRSF000497">
    <property type="entry name" value="MAT"/>
    <property type="match status" value="1"/>
</dbReference>
<dbReference type="SUPFAM" id="SSF55973">
    <property type="entry name" value="S-adenosylmethionine synthetase"/>
    <property type="match status" value="3"/>
</dbReference>
<dbReference type="PROSITE" id="PS00376">
    <property type="entry name" value="ADOMET_SYNTHASE_1"/>
    <property type="match status" value="1"/>
</dbReference>
<dbReference type="PROSITE" id="PS00377">
    <property type="entry name" value="ADOMET_SYNTHASE_2"/>
    <property type="match status" value="1"/>
</dbReference>
<proteinExistence type="inferred from homology"/>
<name>METK_ALISL</name>
<sequence>MAKHLFTSESVSEGHPDKIADQISDAVLDAILEQDPKARVACETYVKTGMVMVGGEVTTSAWVDIEEITRETVREIGYVHSDMGFDANSCAVLNTIGKQSPDINQGVDKEDPKEQGAGDQGIMFGYATNETPILMPAPITYAHLLVKQQAEVRKSGKLDFLRPDAKSQVTFQYDQGKIVGIDAVVLSTQHSDSVTTADLREAVMEEIIKPVLPAEWLSKETKFFINPTGRFVIGGPMGDCGLTGRKIIVDTYGGAARHGGGAFSGKDPSKVDRSAAYAARYVAKNIVAAGMADRCEIQLSYAIGVADPTSIMIETFGTEKVSHDIIIESVRQHFDLRPYGLQEMLNLLQPIYKKTAAYGHFGREEFPWEATDKAEILRDFAGIK</sequence>
<comment type="function">
    <text evidence="1">Catalyzes the formation of S-adenosylmethionine (AdoMet) from methionine and ATP. The overall synthetic reaction is composed of two sequential steps, AdoMet formation and the subsequent tripolyphosphate hydrolysis which occurs prior to release of AdoMet from the enzyme.</text>
</comment>
<comment type="catalytic activity">
    <reaction evidence="1">
        <text>L-methionine + ATP + H2O = S-adenosyl-L-methionine + phosphate + diphosphate</text>
        <dbReference type="Rhea" id="RHEA:21080"/>
        <dbReference type="ChEBI" id="CHEBI:15377"/>
        <dbReference type="ChEBI" id="CHEBI:30616"/>
        <dbReference type="ChEBI" id="CHEBI:33019"/>
        <dbReference type="ChEBI" id="CHEBI:43474"/>
        <dbReference type="ChEBI" id="CHEBI:57844"/>
        <dbReference type="ChEBI" id="CHEBI:59789"/>
        <dbReference type="EC" id="2.5.1.6"/>
    </reaction>
</comment>
<comment type="cofactor">
    <cofactor evidence="1">
        <name>Mg(2+)</name>
        <dbReference type="ChEBI" id="CHEBI:18420"/>
    </cofactor>
    <text evidence="1">Binds 2 divalent ions per subunit.</text>
</comment>
<comment type="cofactor">
    <cofactor evidence="1">
        <name>K(+)</name>
        <dbReference type="ChEBI" id="CHEBI:29103"/>
    </cofactor>
    <text evidence="1">Binds 1 potassium ion per subunit.</text>
</comment>
<comment type="pathway">
    <text evidence="1">Amino-acid biosynthesis; S-adenosyl-L-methionine biosynthesis; S-adenosyl-L-methionine from L-methionine: step 1/1.</text>
</comment>
<comment type="subunit">
    <text evidence="1">Homotetramer; dimer of dimers.</text>
</comment>
<comment type="subcellular location">
    <subcellularLocation>
        <location evidence="1">Cytoplasm</location>
    </subcellularLocation>
</comment>
<comment type="similarity">
    <text evidence="1">Belongs to the AdoMet synthase family.</text>
</comment>
<evidence type="ECO:0000255" key="1">
    <source>
        <dbReference type="HAMAP-Rule" id="MF_00086"/>
    </source>
</evidence>
<feature type="chain" id="PRO_1000093021" description="S-adenosylmethionine synthase">
    <location>
        <begin position="1"/>
        <end position="384"/>
    </location>
</feature>
<feature type="region of interest" description="Flexible loop" evidence="1">
    <location>
        <begin position="99"/>
        <end position="109"/>
    </location>
</feature>
<feature type="binding site" description="in other chain" evidence="1">
    <location>
        <position position="15"/>
    </location>
    <ligand>
        <name>ATP</name>
        <dbReference type="ChEBI" id="CHEBI:30616"/>
        <note>ligand shared between two neighboring subunits</note>
    </ligand>
</feature>
<feature type="binding site" evidence="1">
    <location>
        <position position="17"/>
    </location>
    <ligand>
        <name>Mg(2+)</name>
        <dbReference type="ChEBI" id="CHEBI:18420"/>
    </ligand>
</feature>
<feature type="binding site" evidence="1">
    <location>
        <position position="43"/>
    </location>
    <ligand>
        <name>K(+)</name>
        <dbReference type="ChEBI" id="CHEBI:29103"/>
    </ligand>
</feature>
<feature type="binding site" description="in other chain" evidence="1">
    <location>
        <position position="56"/>
    </location>
    <ligand>
        <name>L-methionine</name>
        <dbReference type="ChEBI" id="CHEBI:57844"/>
        <note>ligand shared between two neighboring subunits</note>
    </ligand>
</feature>
<feature type="binding site" description="in other chain" evidence="1">
    <location>
        <position position="99"/>
    </location>
    <ligand>
        <name>L-methionine</name>
        <dbReference type="ChEBI" id="CHEBI:57844"/>
        <note>ligand shared between two neighboring subunits</note>
    </ligand>
</feature>
<feature type="binding site" description="in other chain" evidence="1">
    <location>
        <begin position="164"/>
        <end position="166"/>
    </location>
    <ligand>
        <name>ATP</name>
        <dbReference type="ChEBI" id="CHEBI:30616"/>
        <note>ligand shared between two neighboring subunits</note>
    </ligand>
</feature>
<feature type="binding site" description="in other chain" evidence="1">
    <location>
        <begin position="230"/>
        <end position="231"/>
    </location>
    <ligand>
        <name>ATP</name>
        <dbReference type="ChEBI" id="CHEBI:30616"/>
        <note>ligand shared between two neighboring subunits</note>
    </ligand>
</feature>
<feature type="binding site" evidence="1">
    <location>
        <position position="239"/>
    </location>
    <ligand>
        <name>ATP</name>
        <dbReference type="ChEBI" id="CHEBI:30616"/>
        <note>ligand shared between two neighboring subunits</note>
    </ligand>
</feature>
<feature type="binding site" evidence="1">
    <location>
        <position position="239"/>
    </location>
    <ligand>
        <name>L-methionine</name>
        <dbReference type="ChEBI" id="CHEBI:57844"/>
        <note>ligand shared between two neighboring subunits</note>
    </ligand>
</feature>
<feature type="binding site" description="in other chain" evidence="1">
    <location>
        <begin position="245"/>
        <end position="246"/>
    </location>
    <ligand>
        <name>ATP</name>
        <dbReference type="ChEBI" id="CHEBI:30616"/>
        <note>ligand shared between two neighboring subunits</note>
    </ligand>
</feature>
<feature type="binding site" evidence="1">
    <location>
        <position position="262"/>
    </location>
    <ligand>
        <name>ATP</name>
        <dbReference type="ChEBI" id="CHEBI:30616"/>
        <note>ligand shared between two neighboring subunits</note>
    </ligand>
</feature>
<feature type="binding site" evidence="1">
    <location>
        <position position="266"/>
    </location>
    <ligand>
        <name>ATP</name>
        <dbReference type="ChEBI" id="CHEBI:30616"/>
        <note>ligand shared between two neighboring subunits</note>
    </ligand>
</feature>
<feature type="binding site" description="in other chain" evidence="1">
    <location>
        <position position="270"/>
    </location>
    <ligand>
        <name>L-methionine</name>
        <dbReference type="ChEBI" id="CHEBI:57844"/>
        <note>ligand shared between two neighboring subunits</note>
    </ligand>
</feature>
<gene>
    <name evidence="1" type="primary">metK</name>
    <name type="ordered locus">VSAL_I0552</name>
</gene>